<feature type="chain" id="PRO_0000412701" description="Protein translocase subunit SecF">
    <location>
        <begin position="1"/>
        <end position="308"/>
    </location>
</feature>
<feature type="transmembrane region" description="Helical" evidence="1">
    <location>
        <begin position="18"/>
        <end position="38"/>
    </location>
</feature>
<feature type="transmembrane region" description="Helical" evidence="1">
    <location>
        <begin position="134"/>
        <end position="154"/>
    </location>
</feature>
<feature type="transmembrane region" description="Helical" evidence="1">
    <location>
        <begin position="160"/>
        <end position="180"/>
    </location>
</feature>
<feature type="transmembrane region" description="Helical" evidence="1">
    <location>
        <begin position="193"/>
        <end position="213"/>
    </location>
</feature>
<feature type="transmembrane region" description="Helical" evidence="1">
    <location>
        <begin position="244"/>
        <end position="264"/>
    </location>
</feature>
<feature type="transmembrane region" description="Helical" evidence="1">
    <location>
        <begin position="272"/>
        <end position="292"/>
    </location>
</feature>
<sequence length="308" mass="34283">MRIFENANYPFVQHRKKAYVFSGVLILLSLVSLVTRGLELGIDFKGGMEFIISGAREPGATAIREALTPVLGTEPEVKTYGAEDILIRVAAEGDINEVQRRIVETIRQRFPETQPEVVQTNIVGPRFAEDLKRGAIYSILGALLVIFVYILIRFEWRFSLGAVVALFHDVLITLGLFSLLHGWLPFSLEIDQTIIAAFLTIVGYSLNDTVVVFDRIREYMNIFKTKPFEEVVNLSINTTLSRTIITSGTTLLVVVILFIFGGEVLRGFSFALIVGIVIGTYSSIFVASPVVIELRARAAARRRLATAR</sequence>
<organism>
    <name type="scientific">Rhodothermus marinus (strain ATCC 43812 / DSM 4252 / R-10)</name>
    <name type="common">Rhodothermus obamensis</name>
    <dbReference type="NCBI Taxonomy" id="518766"/>
    <lineage>
        <taxon>Bacteria</taxon>
        <taxon>Pseudomonadati</taxon>
        <taxon>Rhodothermota</taxon>
        <taxon>Rhodothermia</taxon>
        <taxon>Rhodothermales</taxon>
        <taxon>Rhodothermaceae</taxon>
        <taxon>Rhodothermus</taxon>
    </lineage>
</organism>
<reference key="1">
    <citation type="journal article" date="2009" name="Stand. Genomic Sci.">
        <title>Complete genome sequence of Rhodothermus marinus type strain (R-10).</title>
        <authorList>
            <person name="Nolan M."/>
            <person name="Tindall B.J."/>
            <person name="Pomrenke H."/>
            <person name="Lapidus A."/>
            <person name="Copeland A."/>
            <person name="Glavina Del Rio T."/>
            <person name="Lucas S."/>
            <person name="Chen F."/>
            <person name="Tice H."/>
            <person name="Cheng J.F."/>
            <person name="Saunders E."/>
            <person name="Han C."/>
            <person name="Bruce D."/>
            <person name="Goodwin L."/>
            <person name="Chain P."/>
            <person name="Pitluck S."/>
            <person name="Ovchinikova G."/>
            <person name="Pati A."/>
            <person name="Ivanova N."/>
            <person name="Mavromatis K."/>
            <person name="Chen A."/>
            <person name="Palaniappan K."/>
            <person name="Land M."/>
            <person name="Hauser L."/>
            <person name="Chang Y.J."/>
            <person name="Jeffries C.D."/>
            <person name="Brettin T."/>
            <person name="Goker M."/>
            <person name="Bristow J."/>
            <person name="Eisen J.A."/>
            <person name="Markowitz V."/>
            <person name="Hugenholtz P."/>
            <person name="Kyrpides N.C."/>
            <person name="Klenk H.P."/>
            <person name="Detter J.C."/>
        </authorList>
    </citation>
    <scope>NUCLEOTIDE SEQUENCE [LARGE SCALE GENOMIC DNA]</scope>
    <source>
        <strain>ATCC 43812 / DSM 4252 / R-10</strain>
    </source>
</reference>
<accession>D0MIN3</accession>
<keyword id="KW-0997">Cell inner membrane</keyword>
<keyword id="KW-1003">Cell membrane</keyword>
<keyword id="KW-0472">Membrane</keyword>
<keyword id="KW-0653">Protein transport</keyword>
<keyword id="KW-1185">Reference proteome</keyword>
<keyword id="KW-0811">Translocation</keyword>
<keyword id="KW-0812">Transmembrane</keyword>
<keyword id="KW-1133">Transmembrane helix</keyword>
<keyword id="KW-0813">Transport</keyword>
<proteinExistence type="inferred from homology"/>
<evidence type="ECO:0000255" key="1">
    <source>
        <dbReference type="HAMAP-Rule" id="MF_01464"/>
    </source>
</evidence>
<protein>
    <recommendedName>
        <fullName>Protein translocase subunit SecF</fullName>
    </recommendedName>
</protein>
<comment type="function">
    <text evidence="1">Part of the Sec protein translocase complex. Interacts with the SecYEG preprotein conducting channel. SecDF uses the proton motive force (PMF) to complete protein translocation after the ATP-dependent function of SecA.</text>
</comment>
<comment type="subunit">
    <text evidence="1">Forms a complex with SecD. Part of the essential Sec protein translocation apparatus which comprises SecA, SecYEG and auxiliary proteins SecDF. Other proteins may also be involved.</text>
</comment>
<comment type="subcellular location">
    <subcellularLocation>
        <location evidence="1">Cell inner membrane</location>
        <topology evidence="1">Multi-pass membrane protein</topology>
    </subcellularLocation>
</comment>
<comment type="similarity">
    <text evidence="1">Belongs to the SecD/SecF family. SecF subfamily.</text>
</comment>
<gene>
    <name evidence="1" type="primary">secF</name>
    <name type="ordered locus">Rmar_1454</name>
</gene>
<dbReference type="EMBL" id="CP001807">
    <property type="protein sequence ID" value="ACY48341.1"/>
    <property type="molecule type" value="Genomic_DNA"/>
</dbReference>
<dbReference type="RefSeq" id="WP_012843952.1">
    <property type="nucleotide sequence ID" value="NC_013501.1"/>
</dbReference>
<dbReference type="SMR" id="D0MIN3"/>
<dbReference type="STRING" id="518766.Rmar_1454"/>
<dbReference type="KEGG" id="rmr:Rmar_1454"/>
<dbReference type="eggNOG" id="COG0341">
    <property type="taxonomic scope" value="Bacteria"/>
</dbReference>
<dbReference type="HOGENOM" id="CLU_050012_0_1_10"/>
<dbReference type="OrthoDB" id="9805019at2"/>
<dbReference type="Proteomes" id="UP000002221">
    <property type="component" value="Chromosome"/>
</dbReference>
<dbReference type="GO" id="GO:0005886">
    <property type="term" value="C:plasma membrane"/>
    <property type="evidence" value="ECO:0007669"/>
    <property type="project" value="UniProtKB-SubCell"/>
</dbReference>
<dbReference type="GO" id="GO:0015450">
    <property type="term" value="F:protein-transporting ATPase activity"/>
    <property type="evidence" value="ECO:0007669"/>
    <property type="project" value="InterPro"/>
</dbReference>
<dbReference type="GO" id="GO:0065002">
    <property type="term" value="P:intracellular protein transmembrane transport"/>
    <property type="evidence" value="ECO:0007669"/>
    <property type="project" value="UniProtKB-UniRule"/>
</dbReference>
<dbReference type="GO" id="GO:0006605">
    <property type="term" value="P:protein targeting"/>
    <property type="evidence" value="ECO:0007669"/>
    <property type="project" value="UniProtKB-UniRule"/>
</dbReference>
<dbReference type="GO" id="GO:0043952">
    <property type="term" value="P:protein transport by the Sec complex"/>
    <property type="evidence" value="ECO:0007669"/>
    <property type="project" value="UniProtKB-UniRule"/>
</dbReference>
<dbReference type="FunFam" id="1.20.1640.10:FF:000024">
    <property type="entry name" value="Multifunctional fusion protein"/>
    <property type="match status" value="1"/>
</dbReference>
<dbReference type="Gene3D" id="1.20.1640.10">
    <property type="entry name" value="Multidrug efflux transporter AcrB transmembrane domain"/>
    <property type="match status" value="1"/>
</dbReference>
<dbReference type="HAMAP" id="MF_01464_B">
    <property type="entry name" value="SecF_B"/>
    <property type="match status" value="1"/>
</dbReference>
<dbReference type="InterPro" id="IPR022813">
    <property type="entry name" value="SecD/SecF_arch_bac"/>
</dbReference>
<dbReference type="InterPro" id="IPR022645">
    <property type="entry name" value="SecD/SecF_bac"/>
</dbReference>
<dbReference type="InterPro" id="IPR022646">
    <property type="entry name" value="SecD/SecF_CS"/>
</dbReference>
<dbReference type="InterPro" id="IPR048634">
    <property type="entry name" value="SecD_SecF_C"/>
</dbReference>
<dbReference type="InterPro" id="IPR055344">
    <property type="entry name" value="SecD_SecF_C_bact"/>
</dbReference>
<dbReference type="InterPro" id="IPR005665">
    <property type="entry name" value="SecF_bac"/>
</dbReference>
<dbReference type="NCBIfam" id="TIGR00916">
    <property type="entry name" value="2A0604s01"/>
    <property type="match status" value="1"/>
</dbReference>
<dbReference type="NCBIfam" id="TIGR00966">
    <property type="entry name" value="transloc_SecF"/>
    <property type="match status" value="1"/>
</dbReference>
<dbReference type="PANTHER" id="PTHR30081:SF8">
    <property type="entry name" value="PROTEIN TRANSLOCASE SUBUNIT SECF"/>
    <property type="match status" value="1"/>
</dbReference>
<dbReference type="PANTHER" id="PTHR30081">
    <property type="entry name" value="PROTEIN-EXPORT MEMBRANE PROTEIN SEC"/>
    <property type="match status" value="1"/>
</dbReference>
<dbReference type="Pfam" id="PF07549">
    <property type="entry name" value="Sec_GG"/>
    <property type="match status" value="1"/>
</dbReference>
<dbReference type="Pfam" id="PF02355">
    <property type="entry name" value="SecD_SecF_C"/>
    <property type="match status" value="1"/>
</dbReference>
<dbReference type="PRINTS" id="PR01755">
    <property type="entry name" value="SECFTRNLCASE"/>
</dbReference>
<dbReference type="SUPFAM" id="SSF82866">
    <property type="entry name" value="Multidrug efflux transporter AcrB transmembrane domain"/>
    <property type="match status" value="1"/>
</dbReference>
<name>SECF_RHOM4</name>